<dbReference type="EC" id="3.4.11.9"/>
<dbReference type="EMBL" id="CM001235">
    <property type="protein sequence ID" value="EHA49003.1"/>
    <property type="status" value="ALT_INIT"/>
    <property type="molecule type" value="Genomic_DNA"/>
</dbReference>
<dbReference type="RefSeq" id="XP_003718587.1">
    <property type="nucleotide sequence ID" value="XM_003718539.1"/>
</dbReference>
<dbReference type="SMR" id="A4RF35"/>
<dbReference type="FunCoup" id="A4RF35">
    <property type="interactions" value="387"/>
</dbReference>
<dbReference type="STRING" id="242507.A4RF35"/>
<dbReference type="MEROPS" id="M24.A10"/>
<dbReference type="GeneID" id="2674217"/>
<dbReference type="KEGG" id="mgr:MGG_00476"/>
<dbReference type="eggNOG" id="KOG2413">
    <property type="taxonomic scope" value="Eukaryota"/>
</dbReference>
<dbReference type="InParanoid" id="A4RF35"/>
<dbReference type="OrthoDB" id="9995434at2759"/>
<dbReference type="Proteomes" id="UP000009058">
    <property type="component" value="Chromosome 5"/>
</dbReference>
<dbReference type="GO" id="GO:0005737">
    <property type="term" value="C:cytoplasm"/>
    <property type="evidence" value="ECO:0007669"/>
    <property type="project" value="UniProtKB-ARBA"/>
</dbReference>
<dbReference type="GO" id="GO:0046872">
    <property type="term" value="F:metal ion binding"/>
    <property type="evidence" value="ECO:0007669"/>
    <property type="project" value="UniProtKB-KW"/>
</dbReference>
<dbReference type="GO" id="GO:0070006">
    <property type="term" value="F:metalloaminopeptidase activity"/>
    <property type="evidence" value="ECO:0007669"/>
    <property type="project" value="InterPro"/>
</dbReference>
<dbReference type="GO" id="GO:0006508">
    <property type="term" value="P:proteolysis"/>
    <property type="evidence" value="ECO:0007669"/>
    <property type="project" value="UniProtKB-KW"/>
</dbReference>
<dbReference type="CDD" id="cd01085">
    <property type="entry name" value="APP"/>
    <property type="match status" value="1"/>
</dbReference>
<dbReference type="FunFam" id="3.40.350.10:FF:000010">
    <property type="entry name" value="Probable Xaa-Pro aminopeptidase P"/>
    <property type="match status" value="1"/>
</dbReference>
<dbReference type="FunFam" id="3.90.230.10:FF:000007">
    <property type="entry name" value="Xaa-Pro aminopeptidase P"/>
    <property type="match status" value="1"/>
</dbReference>
<dbReference type="FunFam" id="3.40.350.10:FF:000003">
    <property type="entry name" value="Xaa-pro aminopeptidase P"/>
    <property type="match status" value="1"/>
</dbReference>
<dbReference type="Gene3D" id="3.90.230.10">
    <property type="entry name" value="Creatinase/methionine aminopeptidase superfamily"/>
    <property type="match status" value="1"/>
</dbReference>
<dbReference type="Gene3D" id="3.40.350.10">
    <property type="entry name" value="Creatinase/prolidase N-terminal domain"/>
    <property type="match status" value="2"/>
</dbReference>
<dbReference type="InterPro" id="IPR029149">
    <property type="entry name" value="Creatin/AminoP/Spt16_N"/>
</dbReference>
<dbReference type="InterPro" id="IPR036005">
    <property type="entry name" value="Creatinase/aminopeptidase-like"/>
</dbReference>
<dbReference type="InterPro" id="IPR000587">
    <property type="entry name" value="Creatinase_N"/>
</dbReference>
<dbReference type="InterPro" id="IPR000994">
    <property type="entry name" value="Pept_M24"/>
</dbReference>
<dbReference type="InterPro" id="IPR033740">
    <property type="entry name" value="Pept_M24B"/>
</dbReference>
<dbReference type="InterPro" id="IPR032416">
    <property type="entry name" value="Peptidase_M24_C"/>
</dbReference>
<dbReference type="InterPro" id="IPR001131">
    <property type="entry name" value="Peptidase_M24B_aminopep-P_CS"/>
</dbReference>
<dbReference type="InterPro" id="IPR050422">
    <property type="entry name" value="X-Pro_aminopeptidase_P"/>
</dbReference>
<dbReference type="PANTHER" id="PTHR43763">
    <property type="entry name" value="XAA-PRO AMINOPEPTIDASE 1"/>
    <property type="match status" value="1"/>
</dbReference>
<dbReference type="PANTHER" id="PTHR43763:SF6">
    <property type="entry name" value="XAA-PRO AMINOPEPTIDASE 1"/>
    <property type="match status" value="1"/>
</dbReference>
<dbReference type="Pfam" id="PF01321">
    <property type="entry name" value="Creatinase_N"/>
    <property type="match status" value="1"/>
</dbReference>
<dbReference type="Pfam" id="PF16189">
    <property type="entry name" value="Creatinase_N_2"/>
    <property type="match status" value="1"/>
</dbReference>
<dbReference type="Pfam" id="PF00557">
    <property type="entry name" value="Peptidase_M24"/>
    <property type="match status" value="1"/>
</dbReference>
<dbReference type="Pfam" id="PF16188">
    <property type="entry name" value="Peptidase_M24_C"/>
    <property type="match status" value="1"/>
</dbReference>
<dbReference type="SUPFAM" id="SSF55920">
    <property type="entry name" value="Creatinase/aminopeptidase"/>
    <property type="match status" value="1"/>
</dbReference>
<dbReference type="SUPFAM" id="SSF53092">
    <property type="entry name" value="Creatinase/prolidase N-terminal domain"/>
    <property type="match status" value="1"/>
</dbReference>
<dbReference type="PROSITE" id="PS00491">
    <property type="entry name" value="PROLINE_PEPTIDASE"/>
    <property type="match status" value="1"/>
</dbReference>
<comment type="function">
    <text evidence="1">Catalyzes the removal of a penultimate prolyl residue from the N-termini of peptides.</text>
</comment>
<comment type="catalytic activity">
    <reaction>
        <text>Release of any N-terminal amino acid, including proline, that is linked to proline, even from a dipeptide or tripeptide.</text>
        <dbReference type="EC" id="3.4.11.9"/>
    </reaction>
</comment>
<comment type="cofactor">
    <cofactor evidence="1">
        <name>Mn(2+)</name>
        <dbReference type="ChEBI" id="CHEBI:29035"/>
    </cofactor>
    <text evidence="1">Binds 2 manganese ions per subunit.</text>
</comment>
<comment type="similarity">
    <text evidence="2">Belongs to the peptidase M24B family.</text>
</comment>
<comment type="sequence caution" evidence="2">
    <conflict type="erroneous initiation">
        <sequence resource="EMBL-CDS" id="EHA49003"/>
    </conflict>
    <text>Extended N-terminus.</text>
</comment>
<keyword id="KW-0031">Aminopeptidase</keyword>
<keyword id="KW-0378">Hydrolase</keyword>
<keyword id="KW-0464">Manganese</keyword>
<keyword id="KW-0479">Metal-binding</keyword>
<keyword id="KW-0482">Metalloprotease</keyword>
<keyword id="KW-0645">Protease</keyword>
<keyword id="KW-1185">Reference proteome</keyword>
<gene>
    <name type="primary">AMPP</name>
    <name type="ORF">MGG_00476</name>
</gene>
<sequence>MKTVSTSDRLAELRGLMRARSIDVYIVPTEDAHSSEYIAPCDGRREFISGFSGSAGTAVVTNDKAALATDGRYFNQAATELDNNWELLKQGQPDVPTWQEWTADQAAGGKTVGVDPTLLSSSEAKALQEKIKSKGGNDLVAISDNLVDLVWGRHKPSRPSNPIAFLPKKYSGKDTEPKLKELREVLEKKKVFGFVISTLDEIAWLFNLRGSDIPYNPVFFSYAVVTADNATLYVDASKLSEESHAYLKENKVDIRPYESIFEDSEVLAKSLKPTEDQGEESKVKKLAISNKTSWALKLALGGDGAVDEIKSPVCDAKAIKNETELEGMRQCHIRDGAALIEYFAWLEDQVANKKATLNEVQAATKLENLRAKHEDFVGLSFTTISAVGANAAVIHYKPEEDSCATIDADSVYLCDSGAQFLDGTTDTTRTLHFGKPSEAERKAYTLVLKGNMALDMAIFPKGTTGFALDPFARQFLWQEGLDYRHGTGHGVGSYLNVHEGPIGIGTRKHYAGVPLAPGNVTSIEPGFYEDGSYGIRIENIAMIREVETKHMFGDKPYLGFEHVTMVPYCRRLIDESLLTPREKQWLNDYNKLILDKTSGFFKDDNLTMAWLERETQPY</sequence>
<accession>A4RF35</accession>
<accession>G4NC00</accession>
<feature type="chain" id="PRO_0000411794" description="Probable Xaa-Pro aminopeptidase P">
    <location>
        <begin position="1"/>
        <end position="618"/>
    </location>
</feature>
<feature type="binding site" evidence="1">
    <location>
        <position position="415"/>
    </location>
    <ligand>
        <name>Mn(2+)</name>
        <dbReference type="ChEBI" id="CHEBI:29035"/>
        <label>2</label>
    </ligand>
</feature>
<feature type="binding site" evidence="1">
    <location>
        <position position="426"/>
    </location>
    <ligand>
        <name>Mn(2+)</name>
        <dbReference type="ChEBI" id="CHEBI:29035"/>
        <label>1</label>
    </ligand>
</feature>
<feature type="binding site" evidence="1">
    <location>
        <position position="426"/>
    </location>
    <ligand>
        <name>Mn(2+)</name>
        <dbReference type="ChEBI" id="CHEBI:29035"/>
        <label>2</label>
    </ligand>
</feature>
<feature type="binding site" evidence="1">
    <location>
        <position position="524"/>
    </location>
    <ligand>
        <name>Mn(2+)</name>
        <dbReference type="ChEBI" id="CHEBI:29035"/>
        <label>1</label>
    </ligand>
</feature>
<feature type="binding site" evidence="1">
    <location>
        <position position="538"/>
    </location>
    <ligand>
        <name>Mn(2+)</name>
        <dbReference type="ChEBI" id="CHEBI:29035"/>
        <label>1</label>
    </ligand>
</feature>
<feature type="binding site" evidence="1">
    <location>
        <position position="538"/>
    </location>
    <ligand>
        <name>Mn(2+)</name>
        <dbReference type="ChEBI" id="CHEBI:29035"/>
        <label>2</label>
    </ligand>
</feature>
<evidence type="ECO:0000250" key="1"/>
<evidence type="ECO:0000305" key="2"/>
<proteinExistence type="inferred from homology"/>
<organism>
    <name type="scientific">Pyricularia oryzae (strain 70-15 / ATCC MYA-4617 / FGSC 8958)</name>
    <name type="common">Rice blast fungus</name>
    <name type="synonym">Magnaporthe oryzae</name>
    <dbReference type="NCBI Taxonomy" id="242507"/>
    <lineage>
        <taxon>Eukaryota</taxon>
        <taxon>Fungi</taxon>
        <taxon>Dikarya</taxon>
        <taxon>Ascomycota</taxon>
        <taxon>Pezizomycotina</taxon>
        <taxon>Sordariomycetes</taxon>
        <taxon>Sordariomycetidae</taxon>
        <taxon>Magnaporthales</taxon>
        <taxon>Pyriculariaceae</taxon>
        <taxon>Pyricularia</taxon>
    </lineage>
</organism>
<protein>
    <recommendedName>
        <fullName>Probable Xaa-Pro aminopeptidase P</fullName>
        <shortName>AMPP</shortName>
        <shortName>Aminopeptidase P</shortName>
        <ecNumber>3.4.11.9</ecNumber>
    </recommendedName>
    <alternativeName>
        <fullName>Aminoacylproline aminopeptidase</fullName>
    </alternativeName>
    <alternativeName>
        <fullName>Prolidase</fullName>
    </alternativeName>
</protein>
<reference key="1">
    <citation type="journal article" date="2005" name="Nature">
        <title>The genome sequence of the rice blast fungus Magnaporthe grisea.</title>
        <authorList>
            <person name="Dean R.A."/>
            <person name="Talbot N.J."/>
            <person name="Ebbole D.J."/>
            <person name="Farman M.L."/>
            <person name="Mitchell T.K."/>
            <person name="Orbach M.J."/>
            <person name="Thon M.R."/>
            <person name="Kulkarni R."/>
            <person name="Xu J.-R."/>
            <person name="Pan H."/>
            <person name="Read N.D."/>
            <person name="Lee Y.-H."/>
            <person name="Carbone I."/>
            <person name="Brown D."/>
            <person name="Oh Y.Y."/>
            <person name="Donofrio N."/>
            <person name="Jeong J.S."/>
            <person name="Soanes D.M."/>
            <person name="Djonovic S."/>
            <person name="Kolomiets E."/>
            <person name="Rehmeyer C."/>
            <person name="Li W."/>
            <person name="Harding M."/>
            <person name="Kim S."/>
            <person name="Lebrun M.-H."/>
            <person name="Bohnert H."/>
            <person name="Coughlan S."/>
            <person name="Butler J."/>
            <person name="Calvo S.E."/>
            <person name="Ma L.-J."/>
            <person name="Nicol R."/>
            <person name="Purcell S."/>
            <person name="Nusbaum C."/>
            <person name="Galagan J.E."/>
            <person name="Birren B.W."/>
        </authorList>
    </citation>
    <scope>NUCLEOTIDE SEQUENCE [LARGE SCALE GENOMIC DNA]</scope>
    <source>
        <strain>70-15 / ATCC MYA-4617 / FGSC 8958</strain>
    </source>
</reference>
<name>AMPP1_PYRO7</name>